<comment type="function">
    <text evidence="1 4">Transcriptional corepressor which does not bind directly to DNA and may regulate transcription through recruitment of histone deacetylases to gene promoters. Regulates cell adhesion, migration and proliferation (By similarity). Involved in specification of the lateral neural plate border (NPB) (PubMed:28716930). May be required for segmental gene expression during hindbrain development (By similarity).</text>
</comment>
<comment type="subcellular location">
    <subcellularLocation>
        <location evidence="1">Nucleus</location>
    </subcellularLocation>
    <subcellularLocation>
        <location evidence="1">Cytoplasm</location>
    </subcellularLocation>
</comment>
<comment type="developmental stage">
    <text evidence="4">Expressed at the posterior ectoderm except for the dorsal midline in gastrulae (PubMed:28716930). During neurulation, expression diminishes so as to become restricted to the lateral neural plate border (NPB) and neural crest (PubMed:28716930).</text>
</comment>
<comment type="disruption phenotype">
    <text evidence="4">Morpholino knockdown blocks differentiation of the neural plate border (NPB).</text>
</comment>
<comment type="similarity">
    <text evidence="5">Belongs to the Elbow/Noc family.</text>
</comment>
<organism>
    <name type="scientific">Xenopus laevis</name>
    <name type="common">African clawed frog</name>
    <dbReference type="NCBI Taxonomy" id="8355"/>
    <lineage>
        <taxon>Eukaryota</taxon>
        <taxon>Metazoa</taxon>
        <taxon>Chordata</taxon>
        <taxon>Craniata</taxon>
        <taxon>Vertebrata</taxon>
        <taxon>Euteleostomi</taxon>
        <taxon>Amphibia</taxon>
        <taxon>Batrachia</taxon>
        <taxon>Anura</taxon>
        <taxon>Pipoidea</taxon>
        <taxon>Pipidae</taxon>
        <taxon>Xenopodinae</taxon>
        <taxon>Xenopus</taxon>
        <taxon>Xenopus</taxon>
    </lineage>
</organism>
<name>Z703B_XENLA</name>
<proteinExistence type="evidence at transcript level"/>
<gene>
    <name type="primary">znf703-b</name>
</gene>
<evidence type="ECO:0000250" key="1">
    <source>
        <dbReference type="UniProtKB" id="Q9H7S9"/>
    </source>
</evidence>
<evidence type="ECO:0000255" key="2">
    <source>
        <dbReference type="PROSITE-ProRule" id="PRU00042"/>
    </source>
</evidence>
<evidence type="ECO:0000256" key="3">
    <source>
        <dbReference type="SAM" id="MobiDB-lite"/>
    </source>
</evidence>
<evidence type="ECO:0000269" key="4">
    <source>
    </source>
</evidence>
<evidence type="ECO:0000305" key="5"/>
<dbReference type="EMBL" id="BC108592">
    <property type="protein sequence ID" value="AAI08593.1"/>
    <property type="molecule type" value="mRNA"/>
</dbReference>
<dbReference type="RefSeq" id="NP_001084448.1">
    <property type="nucleotide sequence ID" value="NM_001090979.1"/>
</dbReference>
<dbReference type="DNASU" id="403392"/>
<dbReference type="GeneID" id="403392"/>
<dbReference type="KEGG" id="xla:403392"/>
<dbReference type="AGR" id="Xenbase:XB-GENE-1217466"/>
<dbReference type="CTD" id="403392"/>
<dbReference type="Xenbase" id="XB-GENE-1217466">
    <property type="gene designation" value="znf703.S"/>
</dbReference>
<dbReference type="OrthoDB" id="10054079at2759"/>
<dbReference type="Proteomes" id="UP000186698">
    <property type="component" value="Chromosome 3S"/>
</dbReference>
<dbReference type="Bgee" id="403392">
    <property type="expression patterns" value="Expressed in neurula embryo and 19 other cell types or tissues"/>
</dbReference>
<dbReference type="GO" id="GO:0005737">
    <property type="term" value="C:cytoplasm"/>
    <property type="evidence" value="ECO:0000250"/>
    <property type="project" value="UniProtKB"/>
</dbReference>
<dbReference type="GO" id="GO:0016363">
    <property type="term" value="C:nuclear matrix"/>
    <property type="evidence" value="ECO:0000250"/>
    <property type="project" value="UniProtKB"/>
</dbReference>
<dbReference type="GO" id="GO:0005634">
    <property type="term" value="C:nucleus"/>
    <property type="evidence" value="ECO:0000250"/>
    <property type="project" value="UniProtKB"/>
</dbReference>
<dbReference type="GO" id="GO:0008270">
    <property type="term" value="F:zinc ion binding"/>
    <property type="evidence" value="ECO:0007669"/>
    <property type="project" value="UniProtKB-KW"/>
</dbReference>
<dbReference type="GO" id="GO:0034333">
    <property type="term" value="P:adherens junction assembly"/>
    <property type="evidence" value="ECO:0000250"/>
    <property type="project" value="UniProtKB"/>
</dbReference>
<dbReference type="GO" id="GO:0045892">
    <property type="term" value="P:negative regulation of DNA-templated transcription"/>
    <property type="evidence" value="ECO:0000250"/>
    <property type="project" value="UniProtKB"/>
</dbReference>
<dbReference type="GO" id="GO:0034111">
    <property type="term" value="P:negative regulation of homotypic cell-cell adhesion"/>
    <property type="evidence" value="ECO:0000250"/>
    <property type="project" value="UniProtKB"/>
</dbReference>
<dbReference type="GO" id="GO:0030335">
    <property type="term" value="P:positive regulation of cell migration"/>
    <property type="evidence" value="ECO:0000250"/>
    <property type="project" value="UniProtKB"/>
</dbReference>
<dbReference type="GO" id="GO:0060828">
    <property type="term" value="P:regulation of canonical Wnt signaling pathway"/>
    <property type="evidence" value="ECO:0000250"/>
    <property type="project" value="UniProtKB"/>
</dbReference>
<dbReference type="GO" id="GO:0051726">
    <property type="term" value="P:regulation of cell cycle"/>
    <property type="evidence" value="ECO:0000250"/>
    <property type="project" value="UniProtKB"/>
</dbReference>
<dbReference type="GO" id="GO:0017015">
    <property type="term" value="P:regulation of transforming growth factor beta receptor signaling pathway"/>
    <property type="evidence" value="ECO:0000250"/>
    <property type="project" value="UniProtKB"/>
</dbReference>
<dbReference type="FunFam" id="3.30.160.60:FF:000129">
    <property type="entry name" value="Zinc finger protein 503"/>
    <property type="match status" value="1"/>
</dbReference>
<dbReference type="Gene3D" id="3.30.160.60">
    <property type="entry name" value="Classic Zinc Finger"/>
    <property type="match status" value="1"/>
</dbReference>
<dbReference type="InterPro" id="IPR051520">
    <property type="entry name" value="Elbow/Noc_ZnFinger"/>
</dbReference>
<dbReference type="InterPro" id="IPR022129">
    <property type="entry name" value="Tscrpt_rep_NocA-like"/>
</dbReference>
<dbReference type="InterPro" id="IPR013087">
    <property type="entry name" value="Znf_C2H2_type"/>
</dbReference>
<dbReference type="PANTHER" id="PTHR12522:SF2">
    <property type="entry name" value="ZINC FINGER PROTEIN 703"/>
    <property type="match status" value="1"/>
</dbReference>
<dbReference type="PANTHER" id="PTHR12522">
    <property type="entry name" value="ZINC-FINGER PROTEIN NOLZ1-RELATED"/>
    <property type="match status" value="1"/>
</dbReference>
<dbReference type="Pfam" id="PF12402">
    <property type="entry name" value="nlz1"/>
    <property type="match status" value="1"/>
</dbReference>
<dbReference type="PROSITE" id="PS50157">
    <property type="entry name" value="ZINC_FINGER_C2H2_2"/>
    <property type="match status" value="1"/>
</dbReference>
<keyword id="KW-0963">Cytoplasm</keyword>
<keyword id="KW-0217">Developmental protein</keyword>
<keyword id="KW-0479">Metal-binding</keyword>
<keyword id="KW-0539">Nucleus</keyword>
<keyword id="KW-1185">Reference proteome</keyword>
<keyword id="KW-0678">Repressor</keyword>
<keyword id="KW-0804">Transcription</keyword>
<keyword id="KW-0805">Transcription regulation</keyword>
<keyword id="KW-0862">Zinc</keyword>
<keyword id="KW-0863">Zinc-finger</keyword>
<feature type="chain" id="PRO_0000292210" description="Zinc finger protein 703-B">
    <location>
        <begin position="1"/>
        <end position="531"/>
    </location>
</feature>
<feature type="zinc finger region" description="C2H2-type" evidence="2">
    <location>
        <begin position="404"/>
        <end position="432"/>
    </location>
</feature>
<feature type="region of interest" description="Disordered" evidence="3">
    <location>
        <begin position="1"/>
        <end position="28"/>
    </location>
</feature>
<feature type="region of interest" description="Disordered" evidence="3">
    <location>
        <begin position="88"/>
        <end position="249"/>
    </location>
</feature>
<feature type="region of interest" description="Disordered" evidence="3">
    <location>
        <begin position="295"/>
        <end position="318"/>
    </location>
</feature>
<feature type="compositionally biased region" description="Polar residues" evidence="3">
    <location>
        <begin position="1"/>
        <end position="10"/>
    </location>
</feature>
<feature type="compositionally biased region" description="Low complexity" evidence="3">
    <location>
        <begin position="19"/>
        <end position="28"/>
    </location>
</feature>
<feature type="compositionally biased region" description="Low complexity" evidence="3">
    <location>
        <begin position="113"/>
        <end position="122"/>
    </location>
</feature>
<feature type="compositionally biased region" description="Polar residues" evidence="3">
    <location>
        <begin position="171"/>
        <end position="180"/>
    </location>
</feature>
<feature type="compositionally biased region" description="Basic and acidic residues" evidence="3">
    <location>
        <begin position="183"/>
        <end position="198"/>
    </location>
</feature>
<feature type="compositionally biased region" description="Polar residues" evidence="3">
    <location>
        <begin position="199"/>
        <end position="215"/>
    </location>
</feature>
<feature type="compositionally biased region" description="Low complexity" evidence="3">
    <location>
        <begin position="216"/>
        <end position="227"/>
    </location>
</feature>
<sequence length="531" mass="55357">MNCSPPGSCTDTERQRSGTPATPCATLAPTHPLRQANRLPIRRIKMLTAHTGHLLHPEYLQPLSSTPISPIELDAKKSPLALLAQTCSQIGKPDPPPSSKLNSVTSSEKESGRSSSLKLGESPLEDKSSFKPYAKGGETRKESGSSAGGAADKAGFRVPSGSCQPFPHAPSPSSRVSSPGQHCESKNNESQEKKEPEVNKSSLETSQANPTLTRASISNSSAESSQSGDVAPSSKSDPPSLGSGHVAPISPYKPGHSVFPLPPSGIGYHGSIVGAYAGYPSQYVPGLDHTKSSLVGNQLPGTLGLPGKPPSSSPLTGASPPSFMQGLCRDPYCLSYHNASHLGSSSCSTCVHDPSALKSGYPLVYPSHPLHSVHTTLSSSVTPSLSGHPLYTYGFMLQNDPVPHICNWVSASGPCDKRFATSEELLAHLRTHTALPGADKLLAGYPTGLGSAASCHLHLPPTGPGSPNTLPGSLSLRSPHTFGLSRYHPYGKGHLTAPNGLPVPSLPAGSYYSPYALYGQRLTSASALGYQ</sequence>
<protein>
    <recommendedName>
        <fullName>Zinc finger protein 703-B</fullName>
    </recommendedName>
</protein>
<reference key="1">
    <citation type="submission" date="2005-11" db="EMBL/GenBank/DDBJ databases">
        <authorList>
            <consortium name="NIH - Xenopus Gene Collection (XGC) project"/>
        </authorList>
    </citation>
    <scope>NUCLEOTIDE SEQUENCE [LARGE SCALE MRNA]</scope>
    <source>
        <tissue>Embryo</tissue>
    </source>
</reference>
<reference key="2">
    <citation type="journal article" date="2017" name="Proc. Natl. Acad. Sci. U.S.A.">
        <title>Conserved gene regulatory module specifies lateral neural borders across bilaterians.</title>
        <authorList>
            <person name="Li Y."/>
            <person name="Zhao D."/>
            <person name="Horie T."/>
            <person name="Chen G."/>
            <person name="Bao H."/>
            <person name="Chen S."/>
            <person name="Liu W."/>
            <person name="Horie R."/>
            <person name="Liang T."/>
            <person name="Dong B."/>
            <person name="Feng Q."/>
            <person name="Tao Q."/>
            <person name="Liu X."/>
        </authorList>
    </citation>
    <scope>FUNCTION</scope>
    <scope>DEVELOPMENTAL STAGE</scope>
    <scope>DISRUPTION PHENOTYPE</scope>
</reference>
<accession>Q2VPM4</accession>